<accession>B8EAT7</accession>
<keyword id="KW-0963">Cytoplasm</keyword>
<keyword id="KW-0489">Methyltransferase</keyword>
<keyword id="KW-0698">rRNA processing</keyword>
<keyword id="KW-0949">S-adenosyl-L-methionine</keyword>
<keyword id="KW-0808">Transferase</keyword>
<protein>
    <recommendedName>
        <fullName evidence="1">Ribosomal RNA large subunit methyltransferase M</fullName>
        <ecNumber evidence="1">2.1.1.186</ecNumber>
    </recommendedName>
    <alternativeName>
        <fullName evidence="1">23S rRNA (cytidine2498-2'-O)-methyltransferase</fullName>
    </alternativeName>
    <alternativeName>
        <fullName evidence="1">23S rRNA 2'-O-ribose methyltransferase RlmM</fullName>
    </alternativeName>
</protein>
<reference key="1">
    <citation type="submission" date="2008-12" db="EMBL/GenBank/DDBJ databases">
        <title>Complete sequence of chromosome of Shewanella baltica OS223.</title>
        <authorList>
            <consortium name="US DOE Joint Genome Institute"/>
            <person name="Lucas S."/>
            <person name="Copeland A."/>
            <person name="Lapidus A."/>
            <person name="Glavina del Rio T."/>
            <person name="Dalin E."/>
            <person name="Tice H."/>
            <person name="Bruce D."/>
            <person name="Goodwin L."/>
            <person name="Pitluck S."/>
            <person name="Chertkov O."/>
            <person name="Meincke L."/>
            <person name="Brettin T."/>
            <person name="Detter J.C."/>
            <person name="Han C."/>
            <person name="Kuske C.R."/>
            <person name="Larimer F."/>
            <person name="Land M."/>
            <person name="Hauser L."/>
            <person name="Kyrpides N."/>
            <person name="Ovchinnikova G."/>
            <person name="Brettar I."/>
            <person name="Rodrigues J."/>
            <person name="Konstantinidis K."/>
            <person name="Tiedje J."/>
        </authorList>
    </citation>
    <scope>NUCLEOTIDE SEQUENCE [LARGE SCALE GENOMIC DNA]</scope>
    <source>
        <strain>OS223</strain>
    </source>
</reference>
<comment type="function">
    <text evidence="1">Catalyzes the 2'-O-methylation at nucleotide C2498 in 23S rRNA.</text>
</comment>
<comment type="catalytic activity">
    <reaction evidence="1">
        <text>cytidine(2498) in 23S rRNA + S-adenosyl-L-methionine = 2'-O-methylcytidine(2498) in 23S rRNA + S-adenosyl-L-homocysteine + H(+)</text>
        <dbReference type="Rhea" id="RHEA:42788"/>
        <dbReference type="Rhea" id="RHEA-COMP:10244"/>
        <dbReference type="Rhea" id="RHEA-COMP:10245"/>
        <dbReference type="ChEBI" id="CHEBI:15378"/>
        <dbReference type="ChEBI" id="CHEBI:57856"/>
        <dbReference type="ChEBI" id="CHEBI:59789"/>
        <dbReference type="ChEBI" id="CHEBI:74495"/>
        <dbReference type="ChEBI" id="CHEBI:82748"/>
        <dbReference type="EC" id="2.1.1.186"/>
    </reaction>
</comment>
<comment type="subunit">
    <text evidence="1">Monomer.</text>
</comment>
<comment type="subcellular location">
    <subcellularLocation>
        <location evidence="1">Cytoplasm</location>
    </subcellularLocation>
</comment>
<comment type="similarity">
    <text evidence="1">Belongs to the class I-like SAM-binding methyltransferase superfamily. RNA methyltransferase RlmE family. RlmM subfamily.</text>
</comment>
<evidence type="ECO:0000255" key="1">
    <source>
        <dbReference type="HAMAP-Rule" id="MF_01551"/>
    </source>
</evidence>
<dbReference type="EC" id="2.1.1.186" evidence="1"/>
<dbReference type="EMBL" id="CP001252">
    <property type="protein sequence ID" value="ACK47479.1"/>
    <property type="molecule type" value="Genomic_DNA"/>
</dbReference>
<dbReference type="RefSeq" id="WP_011846285.1">
    <property type="nucleotide sequence ID" value="NC_011663.1"/>
</dbReference>
<dbReference type="SMR" id="B8EAT7"/>
<dbReference type="KEGG" id="sbp:Sbal223_2993"/>
<dbReference type="HOGENOM" id="CLU_043780_0_0_6"/>
<dbReference type="Proteomes" id="UP000002507">
    <property type="component" value="Chromosome"/>
</dbReference>
<dbReference type="GO" id="GO:0005737">
    <property type="term" value="C:cytoplasm"/>
    <property type="evidence" value="ECO:0007669"/>
    <property type="project" value="UniProtKB-SubCell"/>
</dbReference>
<dbReference type="GO" id="GO:0008757">
    <property type="term" value="F:S-adenosylmethionine-dependent methyltransferase activity"/>
    <property type="evidence" value="ECO:0007669"/>
    <property type="project" value="UniProtKB-UniRule"/>
</dbReference>
<dbReference type="GO" id="GO:0032259">
    <property type="term" value="P:methylation"/>
    <property type="evidence" value="ECO:0007669"/>
    <property type="project" value="UniProtKB-KW"/>
</dbReference>
<dbReference type="GO" id="GO:0006364">
    <property type="term" value="P:rRNA processing"/>
    <property type="evidence" value="ECO:0007669"/>
    <property type="project" value="UniProtKB-UniRule"/>
</dbReference>
<dbReference type="Gene3D" id="3.30.2300.20">
    <property type="match status" value="1"/>
</dbReference>
<dbReference type="Gene3D" id="3.30.70.2810">
    <property type="match status" value="1"/>
</dbReference>
<dbReference type="Gene3D" id="3.40.50.150">
    <property type="entry name" value="Vaccinia Virus protein VP39"/>
    <property type="match status" value="1"/>
</dbReference>
<dbReference type="HAMAP" id="MF_01551">
    <property type="entry name" value="23SrRNA_methyltr_M"/>
    <property type="match status" value="1"/>
</dbReference>
<dbReference type="InterPro" id="IPR040739">
    <property type="entry name" value="RlmM_FDX"/>
</dbReference>
<dbReference type="InterPro" id="IPR048646">
    <property type="entry name" value="RlmM_THUMP-like"/>
</dbReference>
<dbReference type="InterPro" id="IPR002877">
    <property type="entry name" value="RNA_MeTrfase_FtsJ_dom"/>
</dbReference>
<dbReference type="InterPro" id="IPR011224">
    <property type="entry name" value="rRNA_MeTrfase_M"/>
</dbReference>
<dbReference type="InterPro" id="IPR029063">
    <property type="entry name" value="SAM-dependent_MTases_sf"/>
</dbReference>
<dbReference type="NCBIfam" id="NF008734">
    <property type="entry name" value="PRK11760.1"/>
    <property type="match status" value="1"/>
</dbReference>
<dbReference type="PANTHER" id="PTHR37524">
    <property type="entry name" value="RIBOSOMAL RNA LARGE SUBUNIT METHYLTRANSFERASE M"/>
    <property type="match status" value="1"/>
</dbReference>
<dbReference type="PANTHER" id="PTHR37524:SF2">
    <property type="entry name" value="RIBOSOMAL RNA METHYLTRANSFERASE FTSJ DOMAIN-CONTAINING PROTEIN"/>
    <property type="match status" value="1"/>
</dbReference>
<dbReference type="Pfam" id="PF01728">
    <property type="entry name" value="FtsJ"/>
    <property type="match status" value="1"/>
</dbReference>
<dbReference type="Pfam" id="PF18125">
    <property type="entry name" value="RlmM_FDX"/>
    <property type="match status" value="1"/>
</dbReference>
<dbReference type="Pfam" id="PF21239">
    <property type="entry name" value="RLMM_N"/>
    <property type="match status" value="1"/>
</dbReference>
<dbReference type="PIRSF" id="PIRSF028774">
    <property type="entry name" value="UCP028774"/>
    <property type="match status" value="1"/>
</dbReference>
<dbReference type="SUPFAM" id="SSF53335">
    <property type="entry name" value="S-adenosyl-L-methionine-dependent methyltransferases"/>
    <property type="match status" value="1"/>
</dbReference>
<proteinExistence type="inferred from homology"/>
<organism>
    <name type="scientific">Shewanella baltica (strain OS223)</name>
    <dbReference type="NCBI Taxonomy" id="407976"/>
    <lineage>
        <taxon>Bacteria</taxon>
        <taxon>Pseudomonadati</taxon>
        <taxon>Pseudomonadota</taxon>
        <taxon>Gammaproteobacteria</taxon>
        <taxon>Alteromonadales</taxon>
        <taxon>Shewanellaceae</taxon>
        <taxon>Shewanella</taxon>
    </lineage>
</organism>
<feature type="chain" id="PRO_1000185322" description="Ribosomal RNA large subunit methyltransferase M">
    <location>
        <begin position="1"/>
        <end position="361"/>
    </location>
</feature>
<feature type="active site" description="Proton acceptor" evidence="1">
    <location>
        <position position="305"/>
    </location>
</feature>
<feature type="binding site" evidence="1">
    <location>
        <position position="187"/>
    </location>
    <ligand>
        <name>S-adenosyl-L-methionine</name>
        <dbReference type="ChEBI" id="CHEBI:59789"/>
    </ligand>
</feature>
<feature type="binding site" evidence="1">
    <location>
        <begin position="220"/>
        <end position="223"/>
    </location>
    <ligand>
        <name>S-adenosyl-L-methionine</name>
        <dbReference type="ChEBI" id="CHEBI:59789"/>
    </ligand>
</feature>
<feature type="binding site" evidence="1">
    <location>
        <position position="239"/>
    </location>
    <ligand>
        <name>S-adenosyl-L-methionine</name>
        <dbReference type="ChEBI" id="CHEBI:59789"/>
    </ligand>
</feature>
<feature type="binding site" evidence="1">
    <location>
        <position position="259"/>
    </location>
    <ligand>
        <name>S-adenosyl-L-methionine</name>
        <dbReference type="ChEBI" id="CHEBI:59789"/>
    </ligand>
</feature>
<feature type="binding site" evidence="1">
    <location>
        <position position="276"/>
    </location>
    <ligand>
        <name>S-adenosyl-L-methionine</name>
        <dbReference type="ChEBI" id="CHEBI:59789"/>
    </ligand>
</feature>
<sequence length="361" mass="40968">MKNLFLFCRAGFEKECAAEIQQRAGELNVGGFVKANNNDAYVVYQCFEDDAADTLVKQLPLDSLIFARQMFAASDLLVDLPENDRISPIVAALSDVSKAGEVRVETPDTNEAKELSAFCRKFTVPLRQHLKKSGSLLAQENPKRPIIHVCFIGPGRAYVGYSYSNNSSPHFMGIPRLKMAADAPSRSSLKLDEAFGQFVPKEEQEERIRSGMNSVDLGACPGGWTYQLVRRGMFVSAVDNGPMDEKLMETGQVKHYREDGFRFEPQRKNIYWLVCDMVEKPARVAELIEAWAINGWFKEAIFNLKLPMKSRYKEVTAILETMQTILKENGVTDFKVQCKHLYHDRDEVTVHLWLRPNTAWN</sequence>
<name>RLMM_SHEB2</name>
<gene>
    <name evidence="1" type="primary">rlmM</name>
    <name type="ordered locus">Sbal223_2993</name>
</gene>